<evidence type="ECO:0000250" key="1">
    <source>
        <dbReference type="UniProtKB" id="P0DJF3"/>
    </source>
</evidence>
<evidence type="ECO:0000250" key="2">
    <source>
        <dbReference type="UniProtKB" id="Q3KNT9"/>
    </source>
</evidence>
<evidence type="ECO:0000255" key="3"/>
<evidence type="ECO:0000269" key="4">
    <source>
    </source>
</evidence>
<evidence type="ECO:0000269" key="5">
    <source>
    </source>
</evidence>
<evidence type="ECO:0000269" key="6">
    <source>
    </source>
</evidence>
<evidence type="ECO:0000269" key="7">
    <source>
    </source>
</evidence>
<evidence type="ECO:0000303" key="8">
    <source>
    </source>
</evidence>
<evidence type="ECO:0000303" key="9">
    <source>
    </source>
</evidence>
<evidence type="ECO:0000305" key="10"/>
<evidence type="ECO:0000312" key="11">
    <source>
        <dbReference type="EMBL" id="ALF95170.1"/>
    </source>
</evidence>
<evidence type="ECO:0000312" key="12">
    <source>
        <dbReference type="Proteomes" id="UP000009136"/>
    </source>
</evidence>
<keyword id="KW-0968">Cytoplasmic vesicle</keyword>
<keyword id="KW-1015">Disulfide bond</keyword>
<keyword id="KW-0278">Fertilization</keyword>
<keyword id="KW-0325">Glycoprotein</keyword>
<keyword id="KW-0472">Membrane</keyword>
<keyword id="KW-1185">Reference proteome</keyword>
<keyword id="KW-0732">Signal</keyword>
<keyword id="KW-0812">Transmembrane</keyword>
<keyword id="KW-1133">Transmembrane helix</keyword>
<feature type="signal peptide" evidence="3">
    <location>
        <begin position="1"/>
        <end position="16"/>
    </location>
</feature>
<feature type="chain" id="PRO_0000450825" description="Sperm-egg fusion protein TMEM95" evidence="3">
    <location>
        <begin position="17"/>
        <end position="166"/>
    </location>
</feature>
<feature type="topological domain" description="Extracellular" evidence="3">
    <location>
        <begin position="17"/>
        <end position="145"/>
    </location>
</feature>
<feature type="transmembrane region" description="Helical" evidence="3">
    <location>
        <begin position="146"/>
        <end position="165"/>
    </location>
</feature>
<feature type="topological domain" description="Cytoplasmic" evidence="3">
    <location>
        <position position="166"/>
    </location>
</feature>
<feature type="glycosylation site" description="N-linked (GlcNAc...) asparagine" evidence="3">
    <location>
        <position position="117"/>
    </location>
</feature>
<feature type="disulfide bond" evidence="2">
    <location>
        <begin position="17"/>
        <end position="118"/>
    </location>
</feature>
<feature type="disulfide bond" evidence="2">
    <location>
        <begin position="20"/>
        <end position="121"/>
    </location>
</feature>
<feature type="disulfide bond" evidence="2">
    <location>
        <begin position="105"/>
        <end position="128"/>
    </location>
</feature>
<feature type="disulfide bond" evidence="2">
    <location>
        <begin position="109"/>
        <end position="134"/>
    </location>
</feature>
<feature type="sequence variant" description="In strain: Fleckvieh; associated with male subfertility; does not affect sperm morphology or motility; reduced interaction with the zona pellucida; not detected in a study of 765 individuals from 13 indigenous Chinese cattle breeds." evidence="4 6 7">
    <location>
        <begin position="152"/>
        <end position="166"/>
    </location>
</feature>
<feature type="sequence conflict" description="In Ref. 1; ALF95170." evidence="10" ref="1">
    <original>M</original>
    <variation>V</variation>
    <location>
        <position position="75"/>
    </location>
</feature>
<feature type="sequence conflict" description="In Ref. 1; ALF95170." evidence="10" ref="1">
    <original>R</original>
    <variation>Q</variation>
    <location>
        <position position="92"/>
    </location>
</feature>
<feature type="sequence conflict" description="In Ref. 1; ALF95170." evidence="10" ref="1">
    <original>R</original>
    <variation>L</variation>
    <location>
        <position position="97"/>
    </location>
</feature>
<feature type="sequence conflict" description="In Ref. 1; ALF95170." evidence="10" ref="1">
    <original>S</original>
    <variation>A</variation>
    <location>
        <position position="108"/>
    </location>
</feature>
<comment type="function">
    <text evidence="1">Sperm protein required for fusion of sperm with the egg membrane during fertilization.</text>
</comment>
<comment type="subunit">
    <text evidence="1">Does not interact with sperm-egg fusion proteins IZUMO1 or IZUMO1R/JUNO.</text>
</comment>
<comment type="subcellular location">
    <subcellularLocation>
        <location evidence="4 6">Cytoplasmic vesicle</location>
        <location evidence="4 6">Secretory vesicle</location>
        <location evidence="4 6">Acrosome membrane</location>
        <topology evidence="10">Single-pass type I membrane protein</topology>
    </subcellularLocation>
    <text evidence="1">Following the acrosome reaction, relocalizes to the equatorial segment.</text>
</comment>
<comment type="tissue specificity">
    <text evidence="5">Detected in testis and brain with higher levels in brain than testis.</text>
</comment>
<comment type="PTM">
    <text evidence="2">N-glycosylated.</text>
</comment>
<comment type="similarity">
    <text evidence="10">Belongs to the TMEM95 family.</text>
</comment>
<comment type="sequence caution" evidence="10">
    <conflict type="erroneous initiation">
        <sequence resource="EMBL-CDS" id="ALF95170"/>
    </conflict>
    <text>Extended N-terminus.</text>
</comment>
<gene>
    <name evidence="2" type="primary">TMEM95</name>
</gene>
<proteinExistence type="evidence at protein level"/>
<protein>
    <recommendedName>
        <fullName evidence="10">Sperm-egg fusion protein TMEM95</fullName>
    </recommendedName>
    <alternativeName>
        <fullName evidence="2">Transmembrane protein 95</fullName>
    </alternativeName>
</protein>
<name>TMM95_BOVIN</name>
<organism evidence="12">
    <name type="scientific">Bos taurus</name>
    <name type="common">Bovine</name>
    <dbReference type="NCBI Taxonomy" id="9913"/>
    <lineage>
        <taxon>Eukaryota</taxon>
        <taxon>Metazoa</taxon>
        <taxon>Chordata</taxon>
        <taxon>Craniata</taxon>
        <taxon>Vertebrata</taxon>
        <taxon>Euteleostomi</taxon>
        <taxon>Mammalia</taxon>
        <taxon>Eutheria</taxon>
        <taxon>Laurasiatheria</taxon>
        <taxon>Artiodactyla</taxon>
        <taxon>Ruminantia</taxon>
        <taxon>Pecora</taxon>
        <taxon>Bovidae</taxon>
        <taxon>Bovinae</taxon>
        <taxon>Bos</taxon>
    </lineage>
</organism>
<sequence length="166" mass="19042">MWTLALGGIFLAAVEACVFCRFPDRELSGRLARLCSQMEVQWKDCEVSWTFSAFALDDASLNKITEKTHRVLRVMEIKGSLYSLPSYWQWLRKTKLREYNREALCPPSCRGSTILYNCSTCQGFEVYCWPRKRCFPGSHDLWEARILLLFVCGTALLLGVPSLAVE</sequence>
<accession>A0A3Q1LRJ2</accession>
<accession>A0A0N9GZ96</accession>
<dbReference type="EMBL" id="KT200428">
    <property type="protein sequence ID" value="ALF95170.1"/>
    <property type="status" value="ALT_INIT"/>
    <property type="molecule type" value="mRNA"/>
</dbReference>
<dbReference type="SMR" id="A0A3Q1LRJ2"/>
<dbReference type="FunCoup" id="A0A3Q1LRJ2">
    <property type="interactions" value="10"/>
</dbReference>
<dbReference type="STRING" id="9913.ENSBTAP00000062895"/>
<dbReference type="GlyCosmos" id="A0A3Q1LRJ2">
    <property type="glycosylation" value="1 site, No reported glycans"/>
</dbReference>
<dbReference type="GlyGen" id="A0A3Q1LRJ2">
    <property type="glycosylation" value="1 site"/>
</dbReference>
<dbReference type="Ensembl" id="ENSBTAT00000080171.2">
    <property type="protein sequence ID" value="ENSBTAP00000062895.2"/>
    <property type="gene ID" value="ENSBTAG00000052395.2"/>
</dbReference>
<dbReference type="VEuPathDB" id="HostDB:ENSBTAG00000052395"/>
<dbReference type="VGNC" id="VGNC:106985">
    <property type="gene designation" value="TMEM95"/>
</dbReference>
<dbReference type="InParanoid" id="A0A3Q1LRJ2"/>
<dbReference type="OrthoDB" id="9936222at2759"/>
<dbReference type="Proteomes" id="UP000009136">
    <property type="component" value="Chromosome 19"/>
</dbReference>
<dbReference type="GO" id="GO:0002080">
    <property type="term" value="C:acrosomal membrane"/>
    <property type="evidence" value="ECO:0000314"/>
    <property type="project" value="UniProtKB"/>
</dbReference>
<dbReference type="GO" id="GO:0001669">
    <property type="term" value="C:acrosomal vesicle"/>
    <property type="evidence" value="ECO:0000314"/>
    <property type="project" value="UniProtKB"/>
</dbReference>
<dbReference type="GO" id="GO:0097524">
    <property type="term" value="C:sperm plasma membrane"/>
    <property type="evidence" value="ECO:0007669"/>
    <property type="project" value="InterPro"/>
</dbReference>
<dbReference type="GO" id="GO:0007342">
    <property type="term" value="P:fusion of sperm to egg plasma membrane involved in single fertilization"/>
    <property type="evidence" value="ECO:0000250"/>
    <property type="project" value="UniProtKB"/>
</dbReference>
<dbReference type="GO" id="GO:0007338">
    <property type="term" value="P:single fertilization"/>
    <property type="evidence" value="ECO:0000315"/>
    <property type="project" value="UniProtKB"/>
</dbReference>
<dbReference type="InterPro" id="IPR027984">
    <property type="entry name" value="TMEM95"/>
</dbReference>
<dbReference type="PANTHER" id="PTHR38808:SF1">
    <property type="entry name" value="SPERM-EGG FUSION PROTEIN TMEM95"/>
    <property type="match status" value="1"/>
</dbReference>
<dbReference type="PANTHER" id="PTHR38808">
    <property type="entry name" value="TRANSMEMBRANE PROTEIN 95"/>
    <property type="match status" value="1"/>
</dbReference>
<dbReference type="Pfam" id="PF15203">
    <property type="entry name" value="TMEM95"/>
    <property type="match status" value="1"/>
</dbReference>
<reference evidence="11" key="1">
    <citation type="journal article" date="2016" name="Gene">
        <title>Identification of novel alternative splicing transcript and expression analysis of bovine TMEM95 gene.</title>
        <authorList>
            <person name="Zhang S."/>
            <person name="Cai H."/>
            <person name="Yang Q."/>
            <person name="Shi T."/>
            <person name="Pan C."/>
            <person name="Lei C."/>
            <person name="Dang R."/>
            <person name="Chen H."/>
            <person name="Lan X."/>
        </authorList>
    </citation>
    <scope>NUCLEOTIDE SEQUENCE [MRNA]</scope>
    <scope>TISSUE SPECIFICITY</scope>
    <source>
        <strain evidence="9">Qinchuan</strain>
    </source>
</reference>
<reference evidence="12" key="2">
    <citation type="submission" date="2018-03" db="EMBL/GenBank/DDBJ databases">
        <title>ARS-UCD1.2.</title>
        <authorList>
            <person name="Rosen B.D."/>
            <person name="Bickhart D.M."/>
            <person name="Koren S."/>
            <person name="Schnabel R.D."/>
            <person name="Hall R."/>
            <person name="Zimin A."/>
            <person name="Dreischer C."/>
            <person name="Schultheiss S."/>
            <person name="Schroeder S.G."/>
            <person name="Elsik C.G."/>
            <person name="Couldrey C."/>
            <person name="Liu G.E."/>
            <person name="Van Tassell C.P."/>
            <person name="Phillippy A.M."/>
            <person name="Smith T.P.L."/>
            <person name="Medrano J.F."/>
        </authorList>
    </citation>
    <scope>NUCLEOTIDE SEQUENCE [LARGE SCALE GENOMIC DNA]</scope>
    <source>
        <strain evidence="12">Hereford</strain>
    </source>
</reference>
<reference evidence="10" key="3">
    <citation type="journal article" date="2014" name="PLoS Genet.">
        <title>A nonsense mutation in TMEM95 encoding a nondescript transmembrane protein causes idiopathic male subfertility in cattle.</title>
        <authorList>
            <person name="Pausch H."/>
            <person name="Koelle S."/>
            <person name="Wurmser C."/>
            <person name="Schwarzenbacher H."/>
            <person name="Emmerling R."/>
            <person name="Jansen S."/>
            <person name="Trottmann M."/>
            <person name="Fuerst C."/>
            <person name="Goetz K.U."/>
            <person name="Fries R."/>
        </authorList>
    </citation>
    <scope>SUBCELLULAR LOCATION</scope>
    <scope>VARIANT 152-CYS--GLU-166 DEL</scope>
    <source>
        <strain evidence="8">Fleckvieh</strain>
    </source>
</reference>
<reference evidence="10" key="4">
    <citation type="journal article" date="2017" name="Biol. Reprod.">
        <title>Subfertility in bulls carrying a nonsense mutation in transmembrane protein 95 is due to failure to interact with the oocyte vestments.</title>
        <authorList>
            <person name="Fernandez-Fuertes B."/>
            <person name="Laguna-Barraza R."/>
            <person name="Fernandez-Gonzalez R."/>
            <person name="Gutierrez-Adan A."/>
            <person name="Blanco-Fernandez A."/>
            <person name="O'Doherty A.M."/>
            <person name="Di Fenza M."/>
            <person name="Kelly A.K."/>
            <person name="Koelle S."/>
            <person name="Lonergan P."/>
        </authorList>
    </citation>
    <scope>SUBCELLULAR LOCATION</scope>
    <scope>CHARACTERIZATION OF VARIANT 152-CYS--GLU-166 DEL</scope>
</reference>
<reference evidence="10" key="5">
    <citation type="journal article" date="2019" name="Animals">
        <title>Detection of Bovine TMEM95 p.Cys161X Mutation in 13 Chinese Indigenous Cattle Breeds.</title>
        <authorList>
            <person name="Zhang S."/>
            <person name="Peng K."/>
            <person name="Zhang G."/>
            <person name="Cao Y."/>
            <person name="Zhang M."/>
            <person name="Chen H."/>
            <person name="Lei C."/>
            <person name="Lan X."/>
            <person name="Zhao Y."/>
        </authorList>
    </citation>
    <scope>ABSENCE OF VARIANT 152-CYS--GLU-166 DEL IN CHINESE CATTLE BREEDS</scope>
</reference>